<name>VIPR_CARAU</name>
<keyword id="KW-1003">Cell membrane</keyword>
<keyword id="KW-1015">Disulfide bond</keyword>
<keyword id="KW-0297">G-protein coupled receptor</keyword>
<keyword id="KW-0325">Glycoprotein</keyword>
<keyword id="KW-0472">Membrane</keyword>
<keyword id="KW-0675">Receptor</keyword>
<keyword id="KW-1185">Reference proteome</keyword>
<keyword id="KW-0807">Transducer</keyword>
<keyword id="KW-0812">Transmembrane</keyword>
<keyword id="KW-1133">Transmembrane helix</keyword>
<proteinExistence type="evidence at transcript level"/>
<comment type="function">
    <text>This is a receptor for VIP. The activity of this receptor is mediated by G proteins which activate adenylyl cyclase.</text>
</comment>
<comment type="subcellular location">
    <subcellularLocation>
        <location>Cell membrane</location>
        <topology>Multi-pass membrane protein</topology>
    </subcellularLocation>
</comment>
<comment type="similarity">
    <text evidence="3">Belongs to the G-protein coupled receptor 2 family.</text>
</comment>
<protein>
    <recommendedName>
        <fullName>Vasoactive intestinal polypeptide receptor</fullName>
        <shortName>VIP receptor</shortName>
        <shortName>VIP-R</shortName>
    </recommendedName>
</protein>
<sequence length="447" mass="50959">MCDVVNEIELARARCENKTAGNVTSGCKGMWDIIACWPSAKVGEHVVIPCPNYFRHFSDHHEGNLSKTCTADGWTEMDPMEIAVYCGYNLNGTVDDDSFFRSVKIGYTIGHSVSLISLTTAIVILCMSRKLHCTRNYIHMHLFVSFILKAIAVFVKDAVLYDVIQESDNCSTASVGCKAVIVFFQYCIMASFFWLLVEGLYLHALLAVSFFSERKYFWWYILIGWGGPTIFIMAWSFAKAYFNDVGCWDIIENSDLFWWIIKTPILASILMNFILFICIIRILRQKINCPDIGRNESNQYSRLAKSTLLLIPLFGINFIIFAFIPENIKTELRLVFDLILGSFQGFVVAVLYCFLNGEVQAEIKRKWRRWHLERFLGPDTKYQHPSMGSNGNNFSTQISMLTRCSPKTRRASTCQDETSITVLGSTTMGYGHQNETVKGHEDVREVS</sequence>
<evidence type="ECO:0000250" key="1"/>
<evidence type="ECO:0000255" key="2"/>
<evidence type="ECO:0000305" key="3"/>
<feature type="chain" id="PRO_0000070331" description="Vasoactive intestinal polypeptide receptor">
    <location>
        <begin position="1"/>
        <end position="447"/>
    </location>
</feature>
<feature type="topological domain" description="Extracellular" evidence="2">
    <location>
        <begin position="1"/>
        <end position="103"/>
    </location>
</feature>
<feature type="transmembrane region" description="Helical; Name=1" evidence="2">
    <location>
        <begin position="104"/>
        <end position="128"/>
    </location>
</feature>
<feature type="topological domain" description="Cytoplasmic" evidence="2">
    <location>
        <begin position="129"/>
        <end position="135"/>
    </location>
</feature>
<feature type="transmembrane region" description="Helical; Name=2" evidence="2">
    <location>
        <begin position="136"/>
        <end position="155"/>
    </location>
</feature>
<feature type="topological domain" description="Extracellular" evidence="2">
    <location>
        <begin position="156"/>
        <end position="178"/>
    </location>
</feature>
<feature type="transmembrane region" description="Helical; Name=3" evidence="2">
    <location>
        <begin position="179"/>
        <end position="202"/>
    </location>
</feature>
<feature type="topological domain" description="Cytoplasmic" evidence="2">
    <location>
        <begin position="203"/>
        <end position="216"/>
    </location>
</feature>
<feature type="transmembrane region" description="Helical; Name=4" evidence="2">
    <location>
        <begin position="217"/>
        <end position="238"/>
    </location>
</feature>
<feature type="topological domain" description="Extracellular" evidence="2">
    <location>
        <begin position="239"/>
        <end position="256"/>
    </location>
</feature>
<feature type="transmembrane region" description="Helical; Name=5" evidence="2">
    <location>
        <begin position="257"/>
        <end position="280"/>
    </location>
</feature>
<feature type="topological domain" description="Cytoplasmic" evidence="2">
    <location>
        <begin position="281"/>
        <end position="305"/>
    </location>
</feature>
<feature type="transmembrane region" description="Helical; Name=6" evidence="2">
    <location>
        <begin position="306"/>
        <end position="325"/>
    </location>
</feature>
<feature type="topological domain" description="Extracellular" evidence="2">
    <location>
        <begin position="326"/>
        <end position="337"/>
    </location>
</feature>
<feature type="transmembrane region" description="Helical; Name=7" evidence="2">
    <location>
        <begin position="338"/>
        <end position="357"/>
    </location>
</feature>
<feature type="topological domain" description="Cytoplasmic" evidence="2">
    <location>
        <begin position="358"/>
        <end position="447"/>
    </location>
</feature>
<feature type="glycosylation site" description="N-linked (GlcNAc...) asparagine" evidence="2">
    <location>
        <position position="17"/>
    </location>
</feature>
<feature type="glycosylation site" description="N-linked (GlcNAc...) asparagine" evidence="2">
    <location>
        <position position="22"/>
    </location>
</feature>
<feature type="glycosylation site" description="N-linked (GlcNAc...) asparagine" evidence="2">
    <location>
        <position position="64"/>
    </location>
</feature>
<feature type="glycosylation site" description="N-linked (GlcNAc...) asparagine" evidence="2">
    <location>
        <position position="91"/>
    </location>
</feature>
<feature type="glycosylation site" description="N-linked (GlcNAc...) asparagine" evidence="2">
    <location>
        <position position="169"/>
    </location>
</feature>
<feature type="disulfide bond" evidence="1">
    <location>
        <begin position="15"/>
        <end position="36"/>
    </location>
</feature>
<feature type="disulfide bond" evidence="1">
    <location>
        <begin position="27"/>
        <end position="69"/>
    </location>
</feature>
<feature type="disulfide bond" evidence="1">
    <location>
        <begin position="50"/>
        <end position="86"/>
    </location>
</feature>
<feature type="disulfide bond" evidence="1">
    <location>
        <begin position="177"/>
        <end position="247"/>
    </location>
</feature>
<reference key="1">
    <citation type="journal article" date="1997" name="Gen. Comp. Endocrinol.">
        <title>Molecular evolution of vertebrate VIP receptors and functional characterization of a VIP receptor from goldfish Carassius auratus.</title>
        <authorList>
            <person name="Chow B.K.C."/>
            <person name="Yuen T.T.H."/>
            <person name="Chan K.W."/>
        </authorList>
    </citation>
    <scope>NUCLEOTIDE SEQUENCE [MRNA]</scope>
</reference>
<accession>Q90308</accession>
<organism>
    <name type="scientific">Carassius auratus</name>
    <name type="common">Goldfish</name>
    <dbReference type="NCBI Taxonomy" id="7957"/>
    <lineage>
        <taxon>Eukaryota</taxon>
        <taxon>Metazoa</taxon>
        <taxon>Chordata</taxon>
        <taxon>Craniata</taxon>
        <taxon>Vertebrata</taxon>
        <taxon>Euteleostomi</taxon>
        <taxon>Actinopterygii</taxon>
        <taxon>Neopterygii</taxon>
        <taxon>Teleostei</taxon>
        <taxon>Ostariophysi</taxon>
        <taxon>Cypriniformes</taxon>
        <taxon>Cyprinidae</taxon>
        <taxon>Cyprininae</taxon>
        <taxon>Carassius</taxon>
    </lineage>
</organism>
<dbReference type="EMBL" id="U56391">
    <property type="protein sequence ID" value="AAB05459.1"/>
    <property type="molecule type" value="mRNA"/>
</dbReference>
<dbReference type="SMR" id="Q90308"/>
<dbReference type="GlyCosmos" id="Q90308">
    <property type="glycosylation" value="5 sites, No reported glycans"/>
</dbReference>
<dbReference type="Proteomes" id="UP000515129">
    <property type="component" value="Unplaced"/>
</dbReference>
<dbReference type="GO" id="GO:0005886">
    <property type="term" value="C:plasma membrane"/>
    <property type="evidence" value="ECO:0007669"/>
    <property type="project" value="UniProtKB-SubCell"/>
</dbReference>
<dbReference type="GO" id="GO:0008528">
    <property type="term" value="F:G protein-coupled peptide receptor activity"/>
    <property type="evidence" value="ECO:0007669"/>
    <property type="project" value="TreeGrafter"/>
</dbReference>
<dbReference type="GO" id="GO:0017046">
    <property type="term" value="F:peptide hormone binding"/>
    <property type="evidence" value="ECO:0007669"/>
    <property type="project" value="TreeGrafter"/>
</dbReference>
<dbReference type="GO" id="GO:0004999">
    <property type="term" value="F:vasoactive intestinal polypeptide receptor activity"/>
    <property type="evidence" value="ECO:0007669"/>
    <property type="project" value="InterPro"/>
</dbReference>
<dbReference type="GO" id="GO:0007188">
    <property type="term" value="P:adenylate cyclase-modulating G protein-coupled receptor signaling pathway"/>
    <property type="evidence" value="ECO:0007669"/>
    <property type="project" value="TreeGrafter"/>
</dbReference>
<dbReference type="GO" id="GO:0007166">
    <property type="term" value="P:cell surface receptor signaling pathway"/>
    <property type="evidence" value="ECO:0007669"/>
    <property type="project" value="InterPro"/>
</dbReference>
<dbReference type="FunFam" id="4.10.1240.10:FF:000016">
    <property type="entry name" value="Vasoactive intestinal peptide receptor 1"/>
    <property type="match status" value="1"/>
</dbReference>
<dbReference type="FunFam" id="1.20.1070.10:FF:000032">
    <property type="entry name" value="Vasoactive intestinal polypeptide receptor 1"/>
    <property type="match status" value="1"/>
</dbReference>
<dbReference type="Gene3D" id="4.10.1240.10">
    <property type="entry name" value="GPCR, family 2, extracellular hormone receptor domain"/>
    <property type="match status" value="1"/>
</dbReference>
<dbReference type="Gene3D" id="1.20.1070.10">
    <property type="entry name" value="Rhodopsin 7-helix transmembrane proteins"/>
    <property type="match status" value="1"/>
</dbReference>
<dbReference type="InterPro" id="IPR050332">
    <property type="entry name" value="GPCR_2"/>
</dbReference>
<dbReference type="InterPro" id="IPR017981">
    <property type="entry name" value="GPCR_2-like_7TM"/>
</dbReference>
<dbReference type="InterPro" id="IPR036445">
    <property type="entry name" value="GPCR_2_extracell_dom_sf"/>
</dbReference>
<dbReference type="InterPro" id="IPR001879">
    <property type="entry name" value="GPCR_2_extracellular_dom"/>
</dbReference>
<dbReference type="InterPro" id="IPR000832">
    <property type="entry name" value="GPCR_2_secretin-like"/>
</dbReference>
<dbReference type="InterPro" id="IPR017983">
    <property type="entry name" value="GPCR_2_secretin-like_CS"/>
</dbReference>
<dbReference type="InterPro" id="IPR001771">
    <property type="entry name" value="GPCR_2_VIP_rcpt_1"/>
</dbReference>
<dbReference type="PANTHER" id="PTHR45620">
    <property type="entry name" value="PDF RECEPTOR-LIKE PROTEIN-RELATED"/>
    <property type="match status" value="1"/>
</dbReference>
<dbReference type="PANTHER" id="PTHR45620:SF24">
    <property type="entry name" value="VASOACTIVE INTESTINAL POLYPEPTIDE RECEPTOR 1"/>
    <property type="match status" value="1"/>
</dbReference>
<dbReference type="Pfam" id="PF00002">
    <property type="entry name" value="7tm_2"/>
    <property type="match status" value="1"/>
</dbReference>
<dbReference type="Pfam" id="PF02793">
    <property type="entry name" value="HRM"/>
    <property type="match status" value="1"/>
</dbReference>
<dbReference type="PRINTS" id="PR00249">
    <property type="entry name" value="GPCRSECRETIN"/>
</dbReference>
<dbReference type="PRINTS" id="PR01154">
    <property type="entry name" value="VIP1RECEPTOR"/>
</dbReference>
<dbReference type="SMART" id="SM00008">
    <property type="entry name" value="HormR"/>
    <property type="match status" value="1"/>
</dbReference>
<dbReference type="SUPFAM" id="SSF81321">
    <property type="entry name" value="Family A G protein-coupled receptor-like"/>
    <property type="match status" value="1"/>
</dbReference>
<dbReference type="SUPFAM" id="SSF111418">
    <property type="entry name" value="Hormone receptor domain"/>
    <property type="match status" value="1"/>
</dbReference>
<dbReference type="PROSITE" id="PS00649">
    <property type="entry name" value="G_PROTEIN_RECEP_F2_1"/>
    <property type="match status" value="1"/>
</dbReference>
<dbReference type="PROSITE" id="PS00650">
    <property type="entry name" value="G_PROTEIN_RECEP_F2_2"/>
    <property type="match status" value="1"/>
</dbReference>
<dbReference type="PROSITE" id="PS50227">
    <property type="entry name" value="G_PROTEIN_RECEP_F2_3"/>
    <property type="match status" value="1"/>
</dbReference>
<dbReference type="PROSITE" id="PS50261">
    <property type="entry name" value="G_PROTEIN_RECEP_F2_4"/>
    <property type="match status" value="1"/>
</dbReference>
<gene>
    <name type="primary">vipr1</name>
</gene>